<proteinExistence type="inferred from homology"/>
<organism>
    <name type="scientific">Methylibium petroleiphilum (strain ATCC BAA-1232 / LMG 22953 / PM1)</name>
    <dbReference type="NCBI Taxonomy" id="420662"/>
    <lineage>
        <taxon>Bacteria</taxon>
        <taxon>Pseudomonadati</taxon>
        <taxon>Pseudomonadota</taxon>
        <taxon>Betaproteobacteria</taxon>
        <taxon>Burkholderiales</taxon>
        <taxon>Sphaerotilaceae</taxon>
        <taxon>Methylibium</taxon>
    </lineage>
</organism>
<comment type="function">
    <text evidence="1">Aspartyl-tRNA synthetase with relaxed tRNA specificity since it is able to aspartylate not only its cognate tRNA(Asp) but also tRNA(Asn). Reaction proceeds in two steps: L-aspartate is first activated by ATP to form Asp-AMP and then transferred to the acceptor end of tRNA(Asp/Asn).</text>
</comment>
<comment type="catalytic activity">
    <reaction evidence="1">
        <text>tRNA(Asx) + L-aspartate + ATP = L-aspartyl-tRNA(Asx) + AMP + diphosphate</text>
        <dbReference type="Rhea" id="RHEA:18349"/>
        <dbReference type="Rhea" id="RHEA-COMP:9710"/>
        <dbReference type="Rhea" id="RHEA-COMP:9711"/>
        <dbReference type="ChEBI" id="CHEBI:29991"/>
        <dbReference type="ChEBI" id="CHEBI:30616"/>
        <dbReference type="ChEBI" id="CHEBI:33019"/>
        <dbReference type="ChEBI" id="CHEBI:78442"/>
        <dbReference type="ChEBI" id="CHEBI:78516"/>
        <dbReference type="ChEBI" id="CHEBI:456215"/>
        <dbReference type="EC" id="6.1.1.23"/>
    </reaction>
</comment>
<comment type="subunit">
    <text evidence="1">Homodimer.</text>
</comment>
<comment type="subcellular location">
    <subcellularLocation>
        <location evidence="1">Cytoplasm</location>
    </subcellularLocation>
</comment>
<comment type="similarity">
    <text evidence="1">Belongs to the class-II aminoacyl-tRNA synthetase family. Type 1 subfamily.</text>
</comment>
<accession>A2SEP2</accession>
<feature type="chain" id="PRO_1000006708" description="Aspartate--tRNA(Asp/Asn) ligase">
    <location>
        <begin position="1"/>
        <end position="599"/>
    </location>
</feature>
<feature type="region of interest" description="Aspartate" evidence="1">
    <location>
        <begin position="196"/>
        <end position="199"/>
    </location>
</feature>
<feature type="binding site" evidence="1">
    <location>
        <position position="172"/>
    </location>
    <ligand>
        <name>L-aspartate</name>
        <dbReference type="ChEBI" id="CHEBI:29991"/>
    </ligand>
</feature>
<feature type="binding site" evidence="1">
    <location>
        <begin position="218"/>
        <end position="220"/>
    </location>
    <ligand>
        <name>ATP</name>
        <dbReference type="ChEBI" id="CHEBI:30616"/>
    </ligand>
</feature>
<feature type="binding site" evidence="1">
    <location>
        <position position="218"/>
    </location>
    <ligand>
        <name>L-aspartate</name>
        <dbReference type="ChEBI" id="CHEBI:29991"/>
    </ligand>
</feature>
<feature type="binding site" evidence="1">
    <location>
        <position position="227"/>
    </location>
    <ligand>
        <name>ATP</name>
        <dbReference type="ChEBI" id="CHEBI:30616"/>
    </ligand>
</feature>
<feature type="binding site" evidence="1">
    <location>
        <position position="454"/>
    </location>
    <ligand>
        <name>L-aspartate</name>
        <dbReference type="ChEBI" id="CHEBI:29991"/>
    </ligand>
</feature>
<feature type="binding site" evidence="1">
    <location>
        <position position="488"/>
    </location>
    <ligand>
        <name>ATP</name>
        <dbReference type="ChEBI" id="CHEBI:30616"/>
    </ligand>
</feature>
<feature type="binding site" evidence="1">
    <location>
        <position position="495"/>
    </location>
    <ligand>
        <name>L-aspartate</name>
        <dbReference type="ChEBI" id="CHEBI:29991"/>
    </ligand>
</feature>
<feature type="binding site" evidence="1">
    <location>
        <begin position="540"/>
        <end position="543"/>
    </location>
    <ligand>
        <name>ATP</name>
        <dbReference type="ChEBI" id="CHEBI:30616"/>
    </ligand>
</feature>
<feature type="site" description="Important for tRNA non-discrimination" evidence="1">
    <location>
        <position position="30"/>
    </location>
</feature>
<feature type="site" description="Important for tRNA non-discrimination" evidence="1">
    <location>
        <position position="81"/>
    </location>
</feature>
<evidence type="ECO:0000255" key="1">
    <source>
        <dbReference type="HAMAP-Rule" id="MF_00044"/>
    </source>
</evidence>
<dbReference type="EC" id="6.1.1.23" evidence="1"/>
<dbReference type="EMBL" id="CP000555">
    <property type="protein sequence ID" value="ABM94031.1"/>
    <property type="molecule type" value="Genomic_DNA"/>
</dbReference>
<dbReference type="RefSeq" id="WP_011828668.1">
    <property type="nucleotide sequence ID" value="NC_008825.1"/>
</dbReference>
<dbReference type="SMR" id="A2SEP2"/>
<dbReference type="STRING" id="420662.Mpe_A1070"/>
<dbReference type="KEGG" id="mpt:Mpe_A1070"/>
<dbReference type="eggNOG" id="COG0173">
    <property type="taxonomic scope" value="Bacteria"/>
</dbReference>
<dbReference type="HOGENOM" id="CLU_014330_3_2_4"/>
<dbReference type="Proteomes" id="UP000000366">
    <property type="component" value="Chromosome"/>
</dbReference>
<dbReference type="GO" id="GO:0005737">
    <property type="term" value="C:cytoplasm"/>
    <property type="evidence" value="ECO:0007669"/>
    <property type="project" value="UniProtKB-SubCell"/>
</dbReference>
<dbReference type="GO" id="GO:0004815">
    <property type="term" value="F:aspartate-tRNA ligase activity"/>
    <property type="evidence" value="ECO:0007669"/>
    <property type="project" value="UniProtKB-UniRule"/>
</dbReference>
<dbReference type="GO" id="GO:0050560">
    <property type="term" value="F:aspartate-tRNA(Asn) ligase activity"/>
    <property type="evidence" value="ECO:0007669"/>
    <property type="project" value="UniProtKB-EC"/>
</dbReference>
<dbReference type="GO" id="GO:0005524">
    <property type="term" value="F:ATP binding"/>
    <property type="evidence" value="ECO:0007669"/>
    <property type="project" value="UniProtKB-UniRule"/>
</dbReference>
<dbReference type="GO" id="GO:0003676">
    <property type="term" value="F:nucleic acid binding"/>
    <property type="evidence" value="ECO:0007669"/>
    <property type="project" value="InterPro"/>
</dbReference>
<dbReference type="GO" id="GO:0006422">
    <property type="term" value="P:aspartyl-tRNA aminoacylation"/>
    <property type="evidence" value="ECO:0007669"/>
    <property type="project" value="UniProtKB-UniRule"/>
</dbReference>
<dbReference type="CDD" id="cd00777">
    <property type="entry name" value="AspRS_core"/>
    <property type="match status" value="1"/>
</dbReference>
<dbReference type="CDD" id="cd04317">
    <property type="entry name" value="EcAspRS_like_N"/>
    <property type="match status" value="1"/>
</dbReference>
<dbReference type="Gene3D" id="3.30.930.10">
    <property type="entry name" value="Bira Bifunctional Protein, Domain 2"/>
    <property type="match status" value="1"/>
</dbReference>
<dbReference type="Gene3D" id="3.30.1360.30">
    <property type="entry name" value="GAD-like domain"/>
    <property type="match status" value="1"/>
</dbReference>
<dbReference type="Gene3D" id="2.40.50.140">
    <property type="entry name" value="Nucleic acid-binding proteins"/>
    <property type="match status" value="1"/>
</dbReference>
<dbReference type="HAMAP" id="MF_00044">
    <property type="entry name" value="Asp_tRNA_synth_type1"/>
    <property type="match status" value="1"/>
</dbReference>
<dbReference type="InterPro" id="IPR004364">
    <property type="entry name" value="Aa-tRNA-synt_II"/>
</dbReference>
<dbReference type="InterPro" id="IPR006195">
    <property type="entry name" value="aa-tRNA-synth_II"/>
</dbReference>
<dbReference type="InterPro" id="IPR045864">
    <property type="entry name" value="aa-tRNA-synth_II/BPL/LPL"/>
</dbReference>
<dbReference type="InterPro" id="IPR004524">
    <property type="entry name" value="Asp-tRNA-ligase_1"/>
</dbReference>
<dbReference type="InterPro" id="IPR047089">
    <property type="entry name" value="Asp-tRNA-ligase_1_N"/>
</dbReference>
<dbReference type="InterPro" id="IPR002312">
    <property type="entry name" value="Asp/Asn-tRNA-synth_IIb"/>
</dbReference>
<dbReference type="InterPro" id="IPR047090">
    <property type="entry name" value="AspRS_core"/>
</dbReference>
<dbReference type="InterPro" id="IPR004115">
    <property type="entry name" value="GAD-like_sf"/>
</dbReference>
<dbReference type="InterPro" id="IPR029351">
    <property type="entry name" value="GAD_dom"/>
</dbReference>
<dbReference type="InterPro" id="IPR012340">
    <property type="entry name" value="NA-bd_OB-fold"/>
</dbReference>
<dbReference type="InterPro" id="IPR004365">
    <property type="entry name" value="NA-bd_OB_tRNA"/>
</dbReference>
<dbReference type="NCBIfam" id="TIGR00459">
    <property type="entry name" value="aspS_bact"/>
    <property type="match status" value="1"/>
</dbReference>
<dbReference type="NCBIfam" id="NF001750">
    <property type="entry name" value="PRK00476.1"/>
    <property type="match status" value="1"/>
</dbReference>
<dbReference type="PANTHER" id="PTHR22594:SF5">
    <property type="entry name" value="ASPARTATE--TRNA LIGASE, MITOCHONDRIAL"/>
    <property type="match status" value="1"/>
</dbReference>
<dbReference type="PANTHER" id="PTHR22594">
    <property type="entry name" value="ASPARTYL/LYSYL-TRNA SYNTHETASE"/>
    <property type="match status" value="1"/>
</dbReference>
<dbReference type="Pfam" id="PF02938">
    <property type="entry name" value="GAD"/>
    <property type="match status" value="1"/>
</dbReference>
<dbReference type="Pfam" id="PF00152">
    <property type="entry name" value="tRNA-synt_2"/>
    <property type="match status" value="1"/>
</dbReference>
<dbReference type="Pfam" id="PF01336">
    <property type="entry name" value="tRNA_anti-codon"/>
    <property type="match status" value="1"/>
</dbReference>
<dbReference type="PRINTS" id="PR01042">
    <property type="entry name" value="TRNASYNTHASP"/>
</dbReference>
<dbReference type="SUPFAM" id="SSF55681">
    <property type="entry name" value="Class II aaRS and biotin synthetases"/>
    <property type="match status" value="1"/>
</dbReference>
<dbReference type="SUPFAM" id="SSF55261">
    <property type="entry name" value="GAD domain-like"/>
    <property type="match status" value="1"/>
</dbReference>
<dbReference type="SUPFAM" id="SSF50249">
    <property type="entry name" value="Nucleic acid-binding proteins"/>
    <property type="match status" value="1"/>
</dbReference>
<dbReference type="PROSITE" id="PS50862">
    <property type="entry name" value="AA_TRNA_LIGASE_II"/>
    <property type="match status" value="1"/>
</dbReference>
<keyword id="KW-0030">Aminoacyl-tRNA synthetase</keyword>
<keyword id="KW-0067">ATP-binding</keyword>
<keyword id="KW-0963">Cytoplasm</keyword>
<keyword id="KW-0436">Ligase</keyword>
<keyword id="KW-0547">Nucleotide-binding</keyword>
<keyword id="KW-0648">Protein biosynthesis</keyword>
<keyword id="KW-1185">Reference proteome</keyword>
<gene>
    <name evidence="1" type="primary">aspS</name>
    <name type="ordered locus">Mpe_A1070</name>
</gene>
<name>SYDND_METPP</name>
<sequence length="599" mass="66943">MRTTYCGLVSEMLLGQTVTLMGWAHRRRDHGGVIFIDLRDREGLVQVVCDPDRAEMFKAAEGVRNEFCLKIVGKVRARPAGTENANLVSGKVELLCHELEVLNPSVTPPFQLDDDNLSETTRLTHRVLDLRRPAMQKNLILRYRVAMEVRKFLDANGFIDIETPMLTKSTPEGARDYLVPSRVNEGMFFALPQSPQLFKQLLMVSGFDRYYQITKCFRDEDLRADRQPEFTQIDIETSFLDEEEIRGMFEGMIRTVFRAVMNVELPGYPVMKYAEAMHRFGSDKPDLRVKMEFTELTEVMKDVDFKVFSAPAQAKGGRVVALRVPGGGEMSRSEIDGYTEFVKIYGAKGLAWIKVNDASKGREGLQSPIVKNLHDAAIAEIIARSGARNGDLLFFGADKAKVVNDAIGALRVKIGHSDFGKSGGLFEDKWAPLWVVDFPMFEHDEEGDRWAAVHNPFTAPKDGHEDLMDTDPGKCIAKAYDMVLNGWELGGGSVRIHRAEVQSKVFSALKIGPDEAQLKFGFLLDALQYGAPPHGGLAFGLDRLVTLMTKADSIRDVIAFPKTQRAQDLLTHAPSPVDEKQLRELHIRLRNPAAGQSGV</sequence>
<reference key="1">
    <citation type="journal article" date="2007" name="J. Bacteriol.">
        <title>Whole-genome analysis of the methyl tert-butyl ether-degrading beta-proteobacterium Methylibium petroleiphilum PM1.</title>
        <authorList>
            <person name="Kane S.R."/>
            <person name="Chakicherla A.Y."/>
            <person name="Chain P.S.G."/>
            <person name="Schmidt R."/>
            <person name="Shin M.W."/>
            <person name="Legler T.C."/>
            <person name="Scow K.M."/>
            <person name="Larimer F.W."/>
            <person name="Lucas S.M."/>
            <person name="Richardson P.M."/>
            <person name="Hristova K.R."/>
        </authorList>
    </citation>
    <scope>NUCLEOTIDE SEQUENCE [LARGE SCALE GENOMIC DNA]</scope>
    <source>
        <strain>ATCC BAA-1232 / LMG 22953 / PM1</strain>
    </source>
</reference>
<protein>
    <recommendedName>
        <fullName evidence="1">Aspartate--tRNA(Asp/Asn) ligase</fullName>
        <ecNumber evidence="1">6.1.1.23</ecNumber>
    </recommendedName>
    <alternativeName>
        <fullName evidence="1">Aspartyl-tRNA synthetase</fullName>
        <shortName evidence="1">AspRS</shortName>
    </alternativeName>
    <alternativeName>
        <fullName evidence="1">Non-discriminating aspartyl-tRNA synthetase</fullName>
        <shortName evidence="1">ND-AspRS</shortName>
    </alternativeName>
</protein>